<organism>
    <name type="scientific">Rattus norvegicus</name>
    <name type="common">Rat</name>
    <dbReference type="NCBI Taxonomy" id="10116"/>
    <lineage>
        <taxon>Eukaryota</taxon>
        <taxon>Metazoa</taxon>
        <taxon>Chordata</taxon>
        <taxon>Craniata</taxon>
        <taxon>Vertebrata</taxon>
        <taxon>Euteleostomi</taxon>
        <taxon>Mammalia</taxon>
        <taxon>Eutheria</taxon>
        <taxon>Euarchontoglires</taxon>
        <taxon>Glires</taxon>
        <taxon>Rodentia</taxon>
        <taxon>Myomorpha</taxon>
        <taxon>Muroidea</taxon>
        <taxon>Muridae</taxon>
        <taxon>Murinae</taxon>
        <taxon>Rattus</taxon>
    </lineage>
</organism>
<evidence type="ECO:0000250" key="1"/>
<evidence type="ECO:0000250" key="2">
    <source>
        <dbReference type="UniProtKB" id="O15534"/>
    </source>
</evidence>
<evidence type="ECO:0000250" key="3">
    <source>
        <dbReference type="UniProtKB" id="O35973"/>
    </source>
</evidence>
<evidence type="ECO:0000250" key="4">
    <source>
        <dbReference type="UniProtKB" id="O54943"/>
    </source>
</evidence>
<evidence type="ECO:0000255" key="5"/>
<evidence type="ECO:0000255" key="6">
    <source>
        <dbReference type="PROSITE-ProRule" id="PRU00140"/>
    </source>
</evidence>
<evidence type="ECO:0000256" key="7">
    <source>
        <dbReference type="SAM" id="MobiDB-lite"/>
    </source>
</evidence>
<evidence type="ECO:0000269" key="8">
    <source>
    </source>
</evidence>
<evidence type="ECO:0000269" key="9">
    <source>
    </source>
</evidence>
<evidence type="ECO:0000269" key="10">
    <source>
    </source>
</evidence>
<evidence type="ECO:0000269" key="11">
    <source>
    </source>
</evidence>
<evidence type="ECO:0000269" key="12">
    <source>
    </source>
</evidence>
<evidence type="ECO:0000305" key="13"/>
<evidence type="ECO:0000312" key="14">
    <source>
        <dbReference type="EMBL" id="BAC53666.1"/>
    </source>
</evidence>
<evidence type="ECO:0000312" key="15">
    <source>
        <dbReference type="RGD" id="727863"/>
    </source>
</evidence>
<accession>Q8CHI5</accession>
<accession>Q2KMM8</accession>
<comment type="function">
    <text evidence="12">Transcriptional repressor which forms a core component of the circadian clock. The circadian clock, an internal time-keeping system, regulates various physiological processes through the generation of approximately 24 hour circadian rhythms in gene expression, which are translated into rhythms in metabolism and behavior. It is derived from the Latin roots 'circa' (about) and 'diem' (day) and acts as an important regulator of a wide array of physiological functions including metabolism, sleep, body temperature, blood pressure, endocrine, immune, cardiovascular, and renal function. Consists of two major components: the central clock, residing in the suprachiasmatic nucleus (SCN) of the brain, and the peripheral clocks that are present in nearly every tissue and organ system. Both the central and peripheral clocks can be reset by environmental cues, also known as Zeitgebers (German for 'timegivers'). The predominant Zeitgeber for the central clock is light, which is sensed by retina and signals directly to the SCN. The central clock entrains the peripheral clocks through neuronal and hormonal signals, body temperature and feeding-related cues, aligning all clocks with the external light/dark cycle. Circadian rhythms allow an organism to achieve temporal homeostasis with its environment at the molecular level by regulating gene expression to create a peak of protein expression once every 24 hours to control when a particular physiological process is most active with respect to the solar day. Transcription and translation of core clock components (CLOCK, NPAS2, BMAL1, BMAL2, PER1, PER2, PER3, CRY1 and CRY2) plays a critical role in rhythm generation, whereas delays imposed by post-translational modifications (PTMs) are important for determining the period (tau) of the rhythms (tau refers to the period of a rhythm and is the length, in time, of one complete cycle). A diurnal rhythm is synchronized with the day/night cycle, while the ultradian and infradian rhythms have a period shorter and longer than 24 hours, respectively. Disruptions in the circadian rhythms contribute to the pathology of cardiovascular diseases, cancer, metabolic syndromes and aging. A transcription/translation feedback loop (TTFL) forms the core of the molecular circadian clock mechanism. Transcription factors, CLOCK or NPAS2 and BMAL1 or BMAL2, form the positive limb of the feedback loop, act in the form of a heterodimer and activate the transcription of core clock genes and clock-controlled genes (involved in key metabolic processes), harboring E-box elements (5'-CACGTG-3') within their promoters. The core clock genes: PER1/2/3 and CRY1/2 which are transcriptional repressors form the negative limb of the feedback loop and interact with the CLOCK|NPAS2-BMAL1|BMAL2 heterodimer inhibiting its activity and thereby negatively regulating their own expression. This heterodimer also activates nuclear receptors NR1D1/2 and RORA/B/G, which form a second feedback loop and which activate and repress BMAL1 transcription, respectively. Regulates circadian target genes expression at post-transcriptional levels, but may not be required for the repression at transcriptional level. Controls PER2 protein decay. Represses CRY2 preventing its repression on CLOCK/BMAL1 target genes such as FXYD5 and SCNN1A in kidney and PPARA in liver. Besides its involvement in the maintenance of the circadian clock, has an important function in the regulation of several processes. Participates in the repression of glucocorticoid receptor NR3C1/GR-induced transcriptional activity by reducing the association of NR3C1/GR to glucocorticoid response elements (GREs) by BMAL1:CLOCK. Plays a role in the modulation of the neuroinflammatory state via the regulation of inflammatory mediators release, such as CCL2 and IL6. In spinal astrocytes, negatively regulates the MAPK14/p38 and MAPK8/JNK MAPK cascades as well as the subsequent activation of NFkappaB. Coordinately regulates the expression of multiple genes that are involved in the regulation of renal sodium reabsorption. Can act as gene expression activator in a gene and tissue specific manner, in kidney enhances WNK1 and SLC12A3 expression in collaboration with CLOCK. Modulates hair follicle cycling. Represses the CLOCK-BMAL1 induced transcription of BHLHE40/DEC1.</text>
</comment>
<comment type="subunit">
    <text evidence="2 3 8 11">Homodimer (By similarity). Component of the circadian core oscillator, which includes the CRY proteins, CLOCK or NPAS2, BMAL1 or BMAL2, CSNK1D and/or CSNK1E, TIMELESS, and the PER proteins (By similarity). Interacts directly with TIMELESS, PER2, PER3, CRY1 and CRY2 (By similarity). Interacts with BMAL1 and CLOCK (By similarity). Interacts with GPRASP1 (PubMed:11597585). Interacts (phosphorylated) with BTRC and FBXW11; the interactions trigger proteasomal degradation (By similarity). Interacts with NONO and WDR5 (PubMed:15860628). Interacts with SFPQ (By similarity). Interacts with USP2 (By similarity). Interacts with HNF4A (By similarity).</text>
</comment>
<comment type="subcellular location">
    <subcellularLocation>
        <location evidence="1">Nucleus</location>
    </subcellularLocation>
    <subcellularLocation>
        <location evidence="1">Cytoplasm</location>
    </subcellularLocation>
    <text evidence="1">Nucleocytoplasmic shuttling is effected by interaction with other circadian core oscillator proteins and/or by phosphorylation. Retention of PER1 in the cytoplasm occurs through PER1-PER2 heterodimer formation. Translocate to the nucleus after phosphorylation by CSNK1D or CSNK1E. Also translocated to the nucleus by CRY1 or CRY2 (By similarity).</text>
</comment>
<comment type="tissue specificity">
    <text evidence="9 10 12">Expressed in pancreas. In the CNS, highly expressed in the SCN, internal granular layer of granular cells of the olfactory bulb, tuberculum olfactorium, piriform cortex, gyrus dentatus of the hippocampus, cerebellum, pars tuberalis/median eminence, and pituitary, and moderately in the tenia tecta, caudate putamen, accumbens nucleus, spinal cord, superior and inferior colliculus and pineal gland.</text>
</comment>
<comment type="induction">
    <text evidence="10">In pancreas, expression exhibits a circadian rhythm in the presence of light/dark cycles.</text>
</comment>
<comment type="PTM">
    <text evidence="3">Phosphorylated on serine residues by CSNK1D, CSNK1E and probably also by CSNK1G2. Phosphorylation by CSNK1D or CSNK1E promotes nuclear location of PER proteins as well as ubiquitination and subsequent degradation. May be dephosphorylated by PP1.</text>
</comment>
<comment type="PTM">
    <text evidence="3">Ubiquitinated; requires phosphorylation by CSNK1E and interaction with BTRC and FBXW11. Deubiquitinated by USP2.</text>
</comment>
<name>PER1_RAT</name>
<feature type="chain" id="PRO_0000162629" description="Period circadian protein homolog 1">
    <location>
        <begin position="1"/>
        <end position="1293"/>
    </location>
</feature>
<feature type="domain" description="PAS 1" evidence="6">
    <location>
        <begin position="208"/>
        <end position="275"/>
    </location>
</feature>
<feature type="domain" description="PAS 2" evidence="6">
    <location>
        <begin position="348"/>
        <end position="414"/>
    </location>
</feature>
<feature type="domain" description="PAC" evidence="5">
    <location>
        <begin position="422"/>
        <end position="465"/>
    </location>
</feature>
<feature type="region of interest" description="Interaction with BTRC" evidence="2">
    <location>
        <begin position="1"/>
        <end position="151"/>
    </location>
</feature>
<feature type="region of interest" description="Disordered" evidence="7">
    <location>
        <begin position="1"/>
        <end position="134"/>
    </location>
</feature>
<feature type="region of interest" description="Disordered" evidence="7">
    <location>
        <begin position="509"/>
        <end position="544"/>
    </location>
</feature>
<feature type="region of interest" description="Required for phosphorylation by CSNK1E" evidence="1">
    <location>
        <begin position="596"/>
        <end position="814"/>
    </location>
</feature>
<feature type="region of interest" description="Disordered" evidence="7">
    <location>
        <begin position="647"/>
        <end position="697"/>
    </location>
</feature>
<feature type="region of interest" description="Disordered" evidence="7">
    <location>
        <begin position="748"/>
        <end position="771"/>
    </location>
</feature>
<feature type="region of interest" description="Disordered" evidence="7">
    <location>
        <begin position="808"/>
        <end position="870"/>
    </location>
</feature>
<feature type="region of interest" description="Disordered" evidence="7">
    <location>
        <begin position="935"/>
        <end position="1094"/>
    </location>
</feature>
<feature type="region of interest" description="CRY binding domain" evidence="1">
    <location>
        <begin position="1145"/>
        <end position="1293"/>
    </location>
</feature>
<feature type="region of interest" description="Disordered" evidence="7">
    <location>
        <begin position="1204"/>
        <end position="1293"/>
    </location>
</feature>
<feature type="short sequence motif" description="Nuclear export signal 1" evidence="4">
    <location>
        <begin position="138"/>
        <end position="147"/>
    </location>
</feature>
<feature type="short sequence motif" description="Nuclear export signal 2" evidence="3">
    <location>
        <begin position="489"/>
        <end position="498"/>
    </location>
</feature>
<feature type="short sequence motif" description="Nuclear localization signal" evidence="3">
    <location>
        <begin position="823"/>
        <end position="839"/>
    </location>
</feature>
<feature type="short sequence motif" description="Nuclear export signal 3" evidence="4">
    <location>
        <begin position="978"/>
        <end position="985"/>
    </location>
</feature>
<feature type="short sequence motif" description="LXXLL">
    <location>
        <begin position="1039"/>
        <end position="1043"/>
    </location>
</feature>
<feature type="compositionally biased region" description="Low complexity" evidence="7">
    <location>
        <begin position="48"/>
        <end position="57"/>
    </location>
</feature>
<feature type="compositionally biased region" description="Low complexity" evidence="7">
    <location>
        <begin position="64"/>
        <end position="115"/>
    </location>
</feature>
<feature type="compositionally biased region" description="Polar residues" evidence="7">
    <location>
        <begin position="116"/>
        <end position="132"/>
    </location>
</feature>
<feature type="compositionally biased region" description="Low complexity" evidence="7">
    <location>
        <begin position="513"/>
        <end position="533"/>
    </location>
</feature>
<feature type="compositionally biased region" description="Low complexity" evidence="7">
    <location>
        <begin position="652"/>
        <end position="661"/>
    </location>
</feature>
<feature type="compositionally biased region" description="Pro residues" evidence="7">
    <location>
        <begin position="750"/>
        <end position="768"/>
    </location>
</feature>
<feature type="compositionally biased region" description="Basic residues" evidence="7">
    <location>
        <begin position="826"/>
        <end position="843"/>
    </location>
</feature>
<feature type="compositionally biased region" description="Pro residues" evidence="7">
    <location>
        <begin position="856"/>
        <end position="870"/>
    </location>
</feature>
<feature type="compositionally biased region" description="Pro residues" evidence="7">
    <location>
        <begin position="952"/>
        <end position="962"/>
    </location>
</feature>
<feature type="compositionally biased region" description="Polar residues" evidence="7">
    <location>
        <begin position="969"/>
        <end position="982"/>
    </location>
</feature>
<feature type="compositionally biased region" description="Low complexity" evidence="7">
    <location>
        <begin position="1032"/>
        <end position="1058"/>
    </location>
</feature>
<feature type="compositionally biased region" description="Gly residues" evidence="7">
    <location>
        <begin position="1059"/>
        <end position="1073"/>
    </location>
</feature>
<feature type="compositionally biased region" description="Low complexity" evidence="7">
    <location>
        <begin position="1074"/>
        <end position="1091"/>
    </location>
</feature>
<feature type="compositionally biased region" description="Gly residues" evidence="7">
    <location>
        <begin position="1232"/>
        <end position="1250"/>
    </location>
</feature>
<feature type="compositionally biased region" description="Polar residues" evidence="7">
    <location>
        <begin position="1255"/>
        <end position="1269"/>
    </location>
</feature>
<feature type="modified residue" description="Phosphothreonine; by CSNK1E" evidence="5">
    <location>
        <position position="121"/>
    </location>
</feature>
<feature type="modified residue" description="Phosphoserine; by CSNK1E" evidence="5">
    <location>
        <position position="122"/>
    </location>
</feature>
<feature type="modified residue" description="Phosphoserine; by CSNK1E" evidence="5">
    <location>
        <position position="126"/>
    </location>
</feature>
<feature type="modified residue" description="Phosphoserine" evidence="3">
    <location>
        <position position="660"/>
    </location>
</feature>
<feature type="modified residue" description="Phosphoserine" evidence="3">
    <location>
        <position position="662"/>
    </location>
</feature>
<feature type="modified residue" description="Phosphoserine" evidence="2">
    <location>
        <position position="703"/>
    </location>
</feature>
<feature type="modified residue" description="Phosphoserine" evidence="2">
    <location>
        <position position="814"/>
    </location>
</feature>
<feature type="modified residue" description="Phosphoserine" evidence="2">
    <location>
        <position position="975"/>
    </location>
</feature>
<feature type="modified residue" description="Phosphoserine" evidence="2">
    <location>
        <position position="976"/>
    </location>
</feature>
<feature type="sequence conflict" description="In Ref. 2; BAC53666." evidence="13" ref="2">
    <original>GGV</original>
    <variation>SCR</variation>
    <location>
        <begin position="1242"/>
        <end position="1244"/>
    </location>
</feature>
<reference evidence="13 14" key="1">
    <citation type="submission" date="2005-01" db="EMBL/GenBank/DDBJ databases">
        <title>Positional cloning of rat hd.</title>
        <authorList>
            <person name="Liska F."/>
            <person name="Blachut S."/>
            <person name="Gosele C."/>
            <person name="Kren V."/>
            <person name="Krenova D."/>
            <person name="Hubner N."/>
        </authorList>
    </citation>
    <scope>NUCLEOTIDE SEQUENCE [MRNA]</scope>
    <source>
        <strain>BN-Lx/Cub</strain>
        <strain>SHR/OlaIpcv</strain>
        <strain>Wistar Hd</strain>
        <tissue>Testis</tissue>
    </source>
</reference>
<reference evidence="13 14" key="2">
    <citation type="submission" date="2002-10" db="EMBL/GenBank/DDBJ databases">
        <authorList>
            <person name="Suzuki S."/>
            <person name="Oishi K."/>
            <person name="Sakamoto K."/>
            <person name="Ishida N."/>
        </authorList>
    </citation>
    <scope>NUCLEOTIDE SEQUENCE [MRNA] OF 1-1244</scope>
    <source>
        <tissue evidence="14">Brain</tissue>
    </source>
</reference>
<reference evidence="13" key="3">
    <citation type="journal article" date="2003" name="Neuroscience">
        <title>Distribution of the rhythm-related genes rPERIOD1, rPERIOD2, and rCLOCK, in the rat brain.</title>
        <authorList>
            <person name="Shieh K.-R."/>
        </authorList>
    </citation>
    <scope>TISSUE SPECIFICITY</scope>
</reference>
<reference key="4">
    <citation type="journal article" date="2001" name="Brain Res.">
        <title>A novel protein interacts with a clock-related protein, rPer1.</title>
        <authorList>
            <person name="Matsuki T."/>
            <person name="Kiyama A."/>
            <person name="Kawabuchi M."/>
            <person name="Okada M."/>
            <person name="Nagai K."/>
        </authorList>
    </citation>
    <scope>INTERACTION WITH GPRASP1</scope>
</reference>
<reference evidence="13" key="5">
    <citation type="journal article" date="2004" name="FEBS Lett.">
        <title>Indication of circadian oscillations in the rat pancreas.</title>
        <authorList>
            <person name="Muehlbauer E."/>
            <person name="Wolgast S."/>
            <person name="Finckh U."/>
            <person name="Peschke D."/>
            <person name="Peschke E."/>
        </authorList>
    </citation>
    <scope>TISSUE SPECIFICITY</scope>
    <scope>INDUCTION</scope>
</reference>
<reference key="6">
    <citation type="journal article" date="2005" name="Science">
        <title>PERIOD1-associated proteins modulate the negative limb of the mammalian circadian oscillator.</title>
        <authorList>
            <person name="Brown S.A."/>
            <person name="Ripperger J."/>
            <person name="Kadener S."/>
            <person name="Fleury-Olela F."/>
            <person name="Vilbois F."/>
            <person name="Rosbash M."/>
            <person name="Schibler U."/>
        </authorList>
    </citation>
    <scope>INTERACTION WITH NONO AND WDR5</scope>
</reference>
<reference key="7">
    <citation type="journal article" date="2014" name="Mol. Cell. Neurosci.">
        <title>Clock gene Per1 regulates the production of CCL2 and interleukin-6 through p38, JNK1 and NF-kappaB activation in spinal astrocytes.</title>
        <authorList>
            <person name="Sugimoto T."/>
            <person name="Morioka N."/>
            <person name="Zhang F.F."/>
            <person name="Sato K."/>
            <person name="Abe H."/>
            <person name="Hisaoka-Nakashima K."/>
            <person name="Nakata Y."/>
        </authorList>
    </citation>
    <scope>FUNCTION IN INFLAMMATION</scope>
    <scope>TISSUE SPECIFICITY</scope>
</reference>
<gene>
    <name evidence="15" type="primary">Per1</name>
</gene>
<dbReference type="EMBL" id="AY903228">
    <property type="protein sequence ID" value="AAX85358.1"/>
    <property type="molecule type" value="mRNA"/>
</dbReference>
<dbReference type="EMBL" id="AY903229">
    <property type="protein sequence ID" value="AAX85359.1"/>
    <property type="molecule type" value="mRNA"/>
</dbReference>
<dbReference type="EMBL" id="AY903230">
    <property type="protein sequence ID" value="AAX85360.1"/>
    <property type="molecule type" value="mRNA"/>
</dbReference>
<dbReference type="EMBL" id="AB092976">
    <property type="protein sequence ID" value="BAC53666.1"/>
    <property type="molecule type" value="mRNA"/>
</dbReference>
<dbReference type="RefSeq" id="NP_001029297.1">
    <property type="nucleotide sequence ID" value="NM_001034125.1"/>
</dbReference>
<dbReference type="RefSeq" id="XP_006246675.1">
    <property type="nucleotide sequence ID" value="XM_006246613.5"/>
</dbReference>
<dbReference type="RefSeq" id="XP_006246676.1">
    <property type="nucleotide sequence ID" value="XM_006246614.5"/>
</dbReference>
<dbReference type="SMR" id="Q8CHI5"/>
<dbReference type="CORUM" id="Q8CHI5"/>
<dbReference type="FunCoup" id="Q8CHI5">
    <property type="interactions" value="332"/>
</dbReference>
<dbReference type="STRING" id="10116.ENSRNOP00000053964"/>
<dbReference type="GlyGen" id="Q8CHI5">
    <property type="glycosylation" value="2 sites"/>
</dbReference>
<dbReference type="PhosphoSitePlus" id="Q8CHI5"/>
<dbReference type="PaxDb" id="10116-ENSRNOP00000053964"/>
<dbReference type="Ensembl" id="ENSRNOT00000057136.4">
    <property type="protein sequence ID" value="ENSRNOP00000053964.4"/>
    <property type="gene ID" value="ENSRNOG00000007387.8"/>
</dbReference>
<dbReference type="GeneID" id="287422"/>
<dbReference type="KEGG" id="rno:287422"/>
<dbReference type="UCSC" id="RGD:727863">
    <property type="organism name" value="rat"/>
</dbReference>
<dbReference type="AGR" id="RGD:727863"/>
<dbReference type="CTD" id="5187"/>
<dbReference type="RGD" id="727863">
    <property type="gene designation" value="Per1"/>
</dbReference>
<dbReference type="eggNOG" id="KOG3753">
    <property type="taxonomic scope" value="Eukaryota"/>
</dbReference>
<dbReference type="GeneTree" id="ENSGT00940000159217"/>
<dbReference type="HOGENOM" id="CLU_006667_0_0_1"/>
<dbReference type="InParanoid" id="Q8CHI5"/>
<dbReference type="OMA" id="GCTGCKC"/>
<dbReference type="OrthoDB" id="7788983at2759"/>
<dbReference type="PhylomeDB" id="Q8CHI5"/>
<dbReference type="TreeFam" id="TF318445"/>
<dbReference type="PRO" id="PR:Q8CHI5"/>
<dbReference type="Proteomes" id="UP000002494">
    <property type="component" value="Chromosome 10"/>
</dbReference>
<dbReference type="GO" id="GO:0005737">
    <property type="term" value="C:cytoplasm"/>
    <property type="evidence" value="ECO:0000266"/>
    <property type="project" value="RGD"/>
</dbReference>
<dbReference type="GO" id="GO:0005634">
    <property type="term" value="C:nucleus"/>
    <property type="evidence" value="ECO:0000314"/>
    <property type="project" value="UniProtKB"/>
</dbReference>
<dbReference type="GO" id="GO:0031490">
    <property type="term" value="F:chromatin DNA binding"/>
    <property type="evidence" value="ECO:0000250"/>
    <property type="project" value="UniProtKB"/>
</dbReference>
<dbReference type="GO" id="GO:0140297">
    <property type="term" value="F:DNA-binding transcription factor binding"/>
    <property type="evidence" value="ECO:0000266"/>
    <property type="project" value="RGD"/>
</dbReference>
<dbReference type="GO" id="GO:0070888">
    <property type="term" value="F:E-box binding"/>
    <property type="evidence" value="ECO:0000266"/>
    <property type="project" value="RGD"/>
</dbReference>
<dbReference type="GO" id="GO:0019900">
    <property type="term" value="F:kinase binding"/>
    <property type="evidence" value="ECO:0000266"/>
    <property type="project" value="RGD"/>
</dbReference>
<dbReference type="GO" id="GO:0000978">
    <property type="term" value="F:RNA polymerase II cis-regulatory region sequence-specific DNA binding"/>
    <property type="evidence" value="ECO:0000266"/>
    <property type="project" value="RGD"/>
</dbReference>
<dbReference type="GO" id="GO:0000976">
    <property type="term" value="F:transcription cis-regulatory region binding"/>
    <property type="evidence" value="ECO:0000266"/>
    <property type="project" value="RGD"/>
</dbReference>
<dbReference type="GO" id="GO:0001222">
    <property type="term" value="F:transcription corepressor binding"/>
    <property type="evidence" value="ECO:0000318"/>
    <property type="project" value="GO_Central"/>
</dbReference>
<dbReference type="GO" id="GO:0031625">
    <property type="term" value="F:ubiquitin protein ligase binding"/>
    <property type="evidence" value="ECO:0000266"/>
    <property type="project" value="RGD"/>
</dbReference>
<dbReference type="GO" id="GO:0006338">
    <property type="term" value="P:chromatin remodeling"/>
    <property type="evidence" value="ECO:0000250"/>
    <property type="project" value="UniProtKB"/>
</dbReference>
<dbReference type="GO" id="GO:0032922">
    <property type="term" value="P:circadian regulation of gene expression"/>
    <property type="evidence" value="ECO:0000250"/>
    <property type="project" value="UniProtKB"/>
</dbReference>
<dbReference type="GO" id="GO:0007623">
    <property type="term" value="P:circadian rhythm"/>
    <property type="evidence" value="ECO:0000315"/>
    <property type="project" value="RGD"/>
</dbReference>
<dbReference type="GO" id="GO:0043153">
    <property type="term" value="P:entrainment of circadian clock by photoperiod"/>
    <property type="evidence" value="ECO:0000250"/>
    <property type="project" value="UniProtKB"/>
</dbReference>
<dbReference type="GO" id="GO:0043124">
    <property type="term" value="P:negative regulation of canonical NF-kappaB signal transduction"/>
    <property type="evidence" value="ECO:0000315"/>
    <property type="project" value="UniProtKB"/>
</dbReference>
<dbReference type="GO" id="GO:0045892">
    <property type="term" value="P:negative regulation of DNA-templated transcription"/>
    <property type="evidence" value="ECO:0000250"/>
    <property type="project" value="UniProtKB"/>
</dbReference>
<dbReference type="GO" id="GO:0046329">
    <property type="term" value="P:negative regulation of JNK cascade"/>
    <property type="evidence" value="ECO:0000315"/>
    <property type="project" value="UniProtKB"/>
</dbReference>
<dbReference type="GO" id="GO:2000323">
    <property type="term" value="P:negative regulation of nuclear receptor-mediated glucocorticoid signaling pathway"/>
    <property type="evidence" value="ECO:0000250"/>
    <property type="project" value="UniProtKB"/>
</dbReference>
<dbReference type="GO" id="GO:0000122">
    <property type="term" value="P:negative regulation of transcription by RNA polymerase II"/>
    <property type="evidence" value="ECO:0000250"/>
    <property type="project" value="UniProtKB"/>
</dbReference>
<dbReference type="GO" id="GO:0003407">
    <property type="term" value="P:neural retina development"/>
    <property type="evidence" value="ECO:0000270"/>
    <property type="project" value="RGD"/>
</dbReference>
<dbReference type="GO" id="GO:0045944">
    <property type="term" value="P:positive regulation of transcription by RNA polymerase II"/>
    <property type="evidence" value="ECO:0000250"/>
    <property type="project" value="UniProtKB"/>
</dbReference>
<dbReference type="GO" id="GO:0010608">
    <property type="term" value="P:post-transcriptional regulation of gene expression"/>
    <property type="evidence" value="ECO:0000250"/>
    <property type="project" value="UniProtKB"/>
</dbReference>
<dbReference type="GO" id="GO:0042752">
    <property type="term" value="P:regulation of circadian rhythm"/>
    <property type="evidence" value="ECO:0000250"/>
    <property type="project" value="UniProtKB"/>
</dbReference>
<dbReference type="GO" id="GO:1900015">
    <property type="term" value="P:regulation of cytokine production involved in inflammatory response"/>
    <property type="evidence" value="ECO:0000315"/>
    <property type="project" value="UniProtKB"/>
</dbReference>
<dbReference type="GO" id="GO:0042634">
    <property type="term" value="P:regulation of hair cycle"/>
    <property type="evidence" value="ECO:0000250"/>
    <property type="project" value="UniProtKB"/>
</dbReference>
<dbReference type="GO" id="GO:1900744">
    <property type="term" value="P:regulation of p38MAPK cascade"/>
    <property type="evidence" value="ECO:0000315"/>
    <property type="project" value="UniProtKB"/>
</dbReference>
<dbReference type="GO" id="GO:0002028">
    <property type="term" value="P:regulation of sodium ion transport"/>
    <property type="evidence" value="ECO:0000250"/>
    <property type="project" value="UniProtKB"/>
</dbReference>
<dbReference type="GO" id="GO:0051591">
    <property type="term" value="P:response to cAMP"/>
    <property type="evidence" value="ECO:0000266"/>
    <property type="project" value="RGD"/>
</dbReference>
<dbReference type="CDD" id="cd00130">
    <property type="entry name" value="PAS"/>
    <property type="match status" value="1"/>
</dbReference>
<dbReference type="FunFam" id="3.30.450.20:FF:000013">
    <property type="entry name" value="Period circadian protein homolog 2"/>
    <property type="match status" value="1"/>
</dbReference>
<dbReference type="FunFam" id="3.30.450.20:FF:000004">
    <property type="entry name" value="Period circadian protein homolog 3"/>
    <property type="match status" value="1"/>
</dbReference>
<dbReference type="Gene3D" id="3.30.450.20">
    <property type="entry name" value="PAS domain"/>
    <property type="match status" value="2"/>
</dbReference>
<dbReference type="InterPro" id="IPR000014">
    <property type="entry name" value="PAS"/>
</dbReference>
<dbReference type="InterPro" id="IPR035965">
    <property type="entry name" value="PAS-like_dom_sf"/>
</dbReference>
<dbReference type="InterPro" id="IPR013655">
    <property type="entry name" value="PAS_fold_3"/>
</dbReference>
<dbReference type="InterPro" id="IPR048814">
    <property type="entry name" value="Per1-3_PAS-A"/>
</dbReference>
<dbReference type="InterPro" id="IPR022728">
    <property type="entry name" value="Period_circadian-like_C"/>
</dbReference>
<dbReference type="InterPro" id="IPR050760">
    <property type="entry name" value="Period_circadian_regulator"/>
</dbReference>
<dbReference type="PANTHER" id="PTHR11269">
    <property type="entry name" value="PERIOD CIRCADIAN PROTEIN"/>
    <property type="match status" value="1"/>
</dbReference>
<dbReference type="PANTHER" id="PTHR11269:SF8">
    <property type="entry name" value="PERIOD CIRCADIAN PROTEIN HOMOLOG 1"/>
    <property type="match status" value="1"/>
</dbReference>
<dbReference type="Pfam" id="PF23170">
    <property type="entry name" value="bHLH_PER"/>
    <property type="match status" value="1"/>
</dbReference>
<dbReference type="Pfam" id="PF08447">
    <property type="entry name" value="PAS_3"/>
    <property type="match status" value="1"/>
</dbReference>
<dbReference type="Pfam" id="PF21353">
    <property type="entry name" value="Per3-like_PAS-A"/>
    <property type="match status" value="1"/>
</dbReference>
<dbReference type="Pfam" id="PF12114">
    <property type="entry name" value="Period_C"/>
    <property type="match status" value="1"/>
</dbReference>
<dbReference type="SMART" id="SM00091">
    <property type="entry name" value="PAS"/>
    <property type="match status" value="2"/>
</dbReference>
<dbReference type="SUPFAM" id="SSF55785">
    <property type="entry name" value="PYP-like sensor domain (PAS domain)"/>
    <property type="match status" value="1"/>
</dbReference>
<dbReference type="PROSITE" id="PS50112">
    <property type="entry name" value="PAS"/>
    <property type="match status" value="1"/>
</dbReference>
<proteinExistence type="evidence at protein level"/>
<sequence length="1293" mass="136164">MSGPLEGADGGGDPRPGEPFCPGGVPSPGAPQHRPCPGPSLADDTDANSNGSSGNESNGHESRGASQRSSHSSSSGNGKDSALLETTESSKSTNSQSPSPPSSSIAYSLLSASSEQDNPSTSGCSSEQSARARTQKELMTALRELKLRLPPERRGKGRSGTLATLQYALACVKQVQANQEYYQQWSLEEGEPCAMDMSTYTLEELEHITSEYTLRNQDTFSVAVSFLTGRIVYISEQAGVLLRCKRDVFRGARFSELLAPQDVGVFYGSTTPSRLPTWGTGTSAGSGLKDFTQEKSVFCRIRGGPDRDPGPRYQPFRLTPYVTKIRVSDGAPAQPCCLLIAERIHSGYEAPRIPPDKRIFTTRHTPSCLFQDVDERAAPLLGYLPQDLLGAPVLLFLHPEDRPLMLAIHKKILQLAGQPFDHSPIRFCARNGEYVTMDTSWAGFVHPWSRKVAFVLGRHKVRTAPLNEDVFTPPVPSPAPSLDSDIQELSEQIHRLLLQPVHSSSTTGLCGVGPLMSPGPLHSPGSSSDSNGGDAEGPGPPAPVTFQQICKDVHLVKHQGQQLFIESRAKPPPRPRLLATGTFKAKVLPCQSPNPELEVAPAPDQASLALAPEEPERKESSGCSYQQINCLDSILRYLESCNIPNTTKRKCASSSCTASSASDDDKQRAGPVPVGAKKDTSSAVLSGEGATPRKEPVVGGTLSPLALANKAESVVSVTSQCSFSSTIVHVGDKKPPESDIIMMEDLPGLAPGPAPSPAPSPTVAPDPAPDAYRPVGLTKAVLSLHTQKEEQAFLSRFRDLGRLRGLDTSSVAPSAPGCHHGPIPSGRRHHCRSKAKRSRHHQTPRPETPCYVSHPSPVPSSGPWPPPPATTPFPAVVQPYPLPVFSPRGGPQPLPPAPTSVSPATFPSPLVTPMVALVLPNYLFPSPTSYPYGVSQAPVEGPPTPASHSPSPSLPPPPPSPPHRPDSPLFNSRCSSPLQLNLLQLEESPRTEGGAAAGGPGSSAGPLPPSEESAEPEPRLVEVTESSNQDALSGSSDLLELLLQEDSRSGTGSAASGSLGSGLGSGSGSGSHEGGSTSASITRSSQSSHTSKYFGSIDSSEAEAGAAQARTEPGDQVIKYVLQDPIWLLMANADQHVMMTYQVPSRDAASVLKQDRERLRAMQKQQPRFSEDQRRELGAVHSWVRKGQLPQALDVTACVDCGSSVQDPGHSDDPLFSELDGLGLEPMEEGGGEGGGVGGGGGGVGGGGGDGGEEAQTQIGTKGSSSQDSAMEEEEQGGSSSSPALPAEENGTS</sequence>
<protein>
    <recommendedName>
        <fullName>Period circadian protein homolog 1</fullName>
        <shortName>rPER1</shortName>
    </recommendedName>
    <alternativeName>
        <fullName>Circadian clock protein PERIOD 1</fullName>
    </alternativeName>
</protein>
<keyword id="KW-0090">Biological rhythms</keyword>
<keyword id="KW-0963">Cytoplasm</keyword>
<keyword id="KW-0539">Nucleus</keyword>
<keyword id="KW-0597">Phosphoprotein</keyword>
<keyword id="KW-1185">Reference proteome</keyword>
<keyword id="KW-0677">Repeat</keyword>
<keyword id="KW-0804">Transcription</keyword>
<keyword id="KW-0805">Transcription regulation</keyword>
<keyword id="KW-0832">Ubl conjugation</keyword>